<sequence length="734" mass="84520">MSASEAGVTEQVKKLSVKDSSNDAVKPNKKENKKSKQQSLYLDPEPTFIEERIEMFDRLQKEYNDKVASMPRVPLKIVLKDGAVKEATSWETTPMDIAKGISKSLADRLCISKVNGQLWDLDRPFEGEANEEIKLELLDFESDEGKKVFWHSSAHVLGESCECHLGAHICLGPPTDDGFFYEMAVRDSMKDISESPERTVSQADFPGLEGVAKNVIKQKQKFERLVMSKEDLLKMFHYSKYKTYLVQTKVPDGGATTVYRCGKLIDLCVGPHIPHTGRIKAFKLLKNSSCYFLGDATNDSLQRVYGISFPDKKLMDAHLKFLAEASMRDHRKIGKEQELFLFNEMSPGSCFWLPHGTRIYNTLVDLLRTEYRKRGYEEVITPNMYNSKLWETSGHWANYKENMFTFEVEKETFGLKPMNCPGHCLMFKSRERSYRELPWRVADFGVIHRNEFSGALSGLTRVRRFQQDDAHIFCTHDQIESEIENIFNFLQYIYGVFGFEFKMELSTRPEKYVGKIETWDAAESKLESALKKWGGNWEINAGDGAFYGPKIDIMISDALRRWHQCATIQLDFQLPNRFELEFKSKDQDSESYERPVMIHRAILGSVERMTAILTEHFAGKWPFWLSPRQVLVVPVGVKYQGYAEDVRNKLHDAGFYADVDLTGNTLQKKVRNGQMLKYNFIFIVGEQEMNEKSVNIRNRDVMEQQGKNATVSVEEVLKQLRNLKDEKRGDNVLA</sequence>
<gene>
    <name type="primary">THS1</name>
    <name type="ordered locus">YIL078W</name>
</gene>
<feature type="chain" id="PRO_0000101125" description="Threonine--tRNA ligase, cytoplasmic">
    <location>
        <begin position="1"/>
        <end position="734"/>
    </location>
</feature>
<feature type="domain" description="TGS" evidence="1">
    <location>
        <begin position="69"/>
        <end position="135"/>
    </location>
</feature>
<feature type="region of interest" description="Disordered" evidence="2">
    <location>
        <begin position="1"/>
        <end position="41"/>
    </location>
</feature>
<feature type="compositionally biased region" description="Basic and acidic residues" evidence="2">
    <location>
        <begin position="11"/>
        <end position="30"/>
    </location>
</feature>
<feature type="modified residue" description="Phosphoserine" evidence="6">
    <location>
        <position position="195"/>
    </location>
</feature>
<feature type="modified residue" description="Phosphoserine" evidence="5 6">
    <location>
        <position position="289"/>
    </location>
</feature>
<feature type="modified residue" description="Phosphothreonine" evidence="6">
    <location>
        <position position="297"/>
    </location>
</feature>
<feature type="modified residue" description="Phosphothreonine" evidence="5">
    <location>
        <position position="381"/>
    </location>
</feature>
<feature type="modified residue" description="Phosphoserine" evidence="5 6">
    <location>
        <position position="453"/>
    </location>
</feature>
<feature type="modified residue" description="Phosphoserine" evidence="5 6">
    <location>
        <position position="457"/>
    </location>
</feature>
<feature type="modified residue" description="Phosphothreonine" evidence="5">
    <location>
        <position position="460"/>
    </location>
</feature>
<feature type="modified residue" description="Phosphoserine" evidence="5">
    <location>
        <position position="605"/>
    </location>
</feature>
<feature type="sequence conflict" description="In Ref. 1; CAA26666." evidence="4" ref="1">
    <original>T</original>
    <variation>A</variation>
    <location>
        <position position="9"/>
    </location>
</feature>
<feature type="sequence conflict" description="In Ref. 1; CAA26666." evidence="4" ref="1">
    <original>K</original>
    <variation>N</variation>
    <location>
        <position position="18"/>
    </location>
</feature>
<feature type="sequence conflict" description="In Ref. 1; CAA26666." evidence="4" ref="1">
    <original>K</original>
    <variation>E</variation>
    <location>
        <position position="502"/>
    </location>
</feature>
<keyword id="KW-0030">Aminoacyl-tRNA synthetase</keyword>
<keyword id="KW-0067">ATP-binding</keyword>
<keyword id="KW-0963">Cytoplasm</keyword>
<keyword id="KW-0436">Ligase</keyword>
<keyword id="KW-0547">Nucleotide-binding</keyword>
<keyword id="KW-0597">Phosphoprotein</keyword>
<keyword id="KW-0648">Protein biosynthesis</keyword>
<keyword id="KW-1185">Reference proteome</keyword>
<comment type="catalytic activity">
    <reaction>
        <text>tRNA(Thr) + L-threonine + ATP = L-threonyl-tRNA(Thr) + AMP + diphosphate + H(+)</text>
        <dbReference type="Rhea" id="RHEA:24624"/>
        <dbReference type="Rhea" id="RHEA-COMP:9670"/>
        <dbReference type="Rhea" id="RHEA-COMP:9704"/>
        <dbReference type="ChEBI" id="CHEBI:15378"/>
        <dbReference type="ChEBI" id="CHEBI:30616"/>
        <dbReference type="ChEBI" id="CHEBI:33019"/>
        <dbReference type="ChEBI" id="CHEBI:57926"/>
        <dbReference type="ChEBI" id="CHEBI:78442"/>
        <dbReference type="ChEBI" id="CHEBI:78534"/>
        <dbReference type="ChEBI" id="CHEBI:456215"/>
        <dbReference type="EC" id="6.1.1.3"/>
    </reaction>
</comment>
<comment type="subcellular location">
    <subcellularLocation>
        <location>Cytoplasm</location>
    </subcellularLocation>
</comment>
<comment type="miscellaneous">
    <text evidence="3">Present with 42600 molecules/cell in log phase SD medium.</text>
</comment>
<comment type="similarity">
    <text evidence="4">Belongs to the class-II aminoacyl-tRNA synthetase family.</text>
</comment>
<evidence type="ECO:0000255" key="1">
    <source>
        <dbReference type="PROSITE-ProRule" id="PRU01228"/>
    </source>
</evidence>
<evidence type="ECO:0000256" key="2">
    <source>
        <dbReference type="SAM" id="MobiDB-lite"/>
    </source>
</evidence>
<evidence type="ECO:0000269" key="3">
    <source>
    </source>
</evidence>
<evidence type="ECO:0000305" key="4"/>
<evidence type="ECO:0007744" key="5">
    <source>
    </source>
</evidence>
<evidence type="ECO:0007744" key="6">
    <source>
    </source>
</evidence>
<organism>
    <name type="scientific">Saccharomyces cerevisiae (strain ATCC 204508 / S288c)</name>
    <name type="common">Baker's yeast</name>
    <dbReference type="NCBI Taxonomy" id="559292"/>
    <lineage>
        <taxon>Eukaryota</taxon>
        <taxon>Fungi</taxon>
        <taxon>Dikarya</taxon>
        <taxon>Ascomycota</taxon>
        <taxon>Saccharomycotina</taxon>
        <taxon>Saccharomycetes</taxon>
        <taxon>Saccharomycetales</taxon>
        <taxon>Saccharomycetaceae</taxon>
        <taxon>Saccharomyces</taxon>
    </lineage>
</organism>
<proteinExistence type="evidence at protein level"/>
<reference key="1">
    <citation type="journal article" date="1985" name="Nucleic Acids Res.">
        <title>Cloning and characterization of the gene for the yeast cytoplasmic threonyl-tRNA synthetase.</title>
        <authorList>
            <person name="Pape L.K."/>
            <person name="Tzagoloff A."/>
        </authorList>
    </citation>
    <scope>NUCLEOTIDE SEQUENCE [GENOMIC DNA]</scope>
</reference>
<reference key="2">
    <citation type="journal article" date="1997" name="Nature">
        <title>The nucleotide sequence of Saccharomyces cerevisiae chromosome IX.</title>
        <authorList>
            <person name="Churcher C.M."/>
            <person name="Bowman S."/>
            <person name="Badcock K."/>
            <person name="Bankier A.T."/>
            <person name="Brown D."/>
            <person name="Chillingworth T."/>
            <person name="Connor R."/>
            <person name="Devlin K."/>
            <person name="Gentles S."/>
            <person name="Hamlin N."/>
            <person name="Harris D.E."/>
            <person name="Horsnell T."/>
            <person name="Hunt S."/>
            <person name="Jagels K."/>
            <person name="Jones M."/>
            <person name="Lye G."/>
            <person name="Moule S."/>
            <person name="Odell C."/>
            <person name="Pearson D."/>
            <person name="Rajandream M.A."/>
            <person name="Rice P."/>
            <person name="Rowley N."/>
            <person name="Skelton J."/>
            <person name="Smith V."/>
            <person name="Walsh S.V."/>
            <person name="Whitehead S."/>
            <person name="Barrell B.G."/>
        </authorList>
    </citation>
    <scope>NUCLEOTIDE SEQUENCE [LARGE SCALE GENOMIC DNA]</scope>
    <source>
        <strain>ATCC 204508 / S288c</strain>
    </source>
</reference>
<reference key="3">
    <citation type="journal article" date="2014" name="G3 (Bethesda)">
        <title>The reference genome sequence of Saccharomyces cerevisiae: Then and now.</title>
        <authorList>
            <person name="Engel S.R."/>
            <person name="Dietrich F.S."/>
            <person name="Fisk D.G."/>
            <person name="Binkley G."/>
            <person name="Balakrishnan R."/>
            <person name="Costanzo M.C."/>
            <person name="Dwight S.S."/>
            <person name="Hitz B.C."/>
            <person name="Karra K."/>
            <person name="Nash R.S."/>
            <person name="Weng S."/>
            <person name="Wong E.D."/>
            <person name="Lloyd P."/>
            <person name="Skrzypek M.S."/>
            <person name="Miyasato S.R."/>
            <person name="Simison M."/>
            <person name="Cherry J.M."/>
        </authorList>
    </citation>
    <scope>GENOME REANNOTATION</scope>
    <source>
        <strain>ATCC 204508 / S288c</strain>
    </source>
</reference>
<reference key="4">
    <citation type="journal article" date="2003" name="Nature">
        <title>Global analysis of protein expression in yeast.</title>
        <authorList>
            <person name="Ghaemmaghami S."/>
            <person name="Huh W.-K."/>
            <person name="Bower K."/>
            <person name="Howson R.W."/>
            <person name="Belle A."/>
            <person name="Dephoure N."/>
            <person name="O'Shea E.K."/>
            <person name="Weissman J.S."/>
        </authorList>
    </citation>
    <scope>LEVEL OF PROTEIN EXPRESSION [LARGE SCALE ANALYSIS]</scope>
</reference>
<reference key="5">
    <citation type="journal article" date="2008" name="Mol. Cell. Proteomics">
        <title>A multidimensional chromatography technology for in-depth phosphoproteome analysis.</title>
        <authorList>
            <person name="Albuquerque C.P."/>
            <person name="Smolka M.B."/>
            <person name="Payne S.H."/>
            <person name="Bafna V."/>
            <person name="Eng J."/>
            <person name="Zhou H."/>
        </authorList>
    </citation>
    <scope>PHOSPHORYLATION [LARGE SCALE ANALYSIS] AT SER-289; THR-381; SER-453; SER-457; THR-460 AND SER-605</scope>
    <scope>IDENTIFICATION BY MASS SPECTROMETRY [LARGE SCALE ANALYSIS]</scope>
</reference>
<reference key="6">
    <citation type="journal article" date="2009" name="Science">
        <title>Global analysis of Cdk1 substrate phosphorylation sites provides insights into evolution.</title>
        <authorList>
            <person name="Holt L.J."/>
            <person name="Tuch B.B."/>
            <person name="Villen J."/>
            <person name="Johnson A.D."/>
            <person name="Gygi S.P."/>
            <person name="Morgan D.O."/>
        </authorList>
    </citation>
    <scope>PHOSPHORYLATION [LARGE SCALE ANALYSIS] AT SER-195; SER-289; THR-297; SER-453 AND SER-457</scope>
    <scope>IDENTIFICATION BY MASS SPECTROMETRY [LARGE SCALE ANALYSIS]</scope>
</reference>
<protein>
    <recommendedName>
        <fullName>Threonine--tRNA ligase, cytoplasmic</fullName>
        <ecNumber>6.1.1.3</ecNumber>
    </recommendedName>
    <alternativeName>
        <fullName>Threonyl-tRNA synthetase</fullName>
        <shortName>ThrRS</shortName>
    </alternativeName>
</protein>
<dbReference type="EC" id="6.1.1.3"/>
<dbReference type="EMBL" id="Z37997">
    <property type="protein sequence ID" value="CAA86092.1"/>
    <property type="molecule type" value="Genomic_DNA"/>
</dbReference>
<dbReference type="EMBL" id="X02906">
    <property type="protein sequence ID" value="CAA26666.1"/>
    <property type="molecule type" value="Genomic_DNA"/>
</dbReference>
<dbReference type="EMBL" id="BK006942">
    <property type="protein sequence ID" value="DAA08472.1"/>
    <property type="molecule type" value="Genomic_DNA"/>
</dbReference>
<dbReference type="PIR" id="S48366">
    <property type="entry name" value="YSBYTC"/>
</dbReference>
<dbReference type="RefSeq" id="NP_116578.3">
    <property type="nucleotide sequence ID" value="NM_001179428.3"/>
</dbReference>
<dbReference type="SMR" id="P04801"/>
<dbReference type="BioGRID" id="34914">
    <property type="interactions" value="348"/>
</dbReference>
<dbReference type="DIP" id="DIP-5307N"/>
<dbReference type="FunCoup" id="P04801">
    <property type="interactions" value="1180"/>
</dbReference>
<dbReference type="IntAct" id="P04801">
    <property type="interactions" value="51"/>
</dbReference>
<dbReference type="MINT" id="P04801"/>
<dbReference type="STRING" id="4932.YIL078W"/>
<dbReference type="iPTMnet" id="P04801"/>
<dbReference type="PaxDb" id="4932-YIL078W"/>
<dbReference type="PeptideAtlas" id="P04801"/>
<dbReference type="EnsemblFungi" id="YIL078W_mRNA">
    <property type="protein sequence ID" value="YIL078W"/>
    <property type="gene ID" value="YIL078W"/>
</dbReference>
<dbReference type="GeneID" id="854732"/>
<dbReference type="KEGG" id="sce:YIL078W"/>
<dbReference type="AGR" id="SGD:S000001340"/>
<dbReference type="SGD" id="S000001340">
    <property type="gene designation" value="THS1"/>
</dbReference>
<dbReference type="VEuPathDB" id="FungiDB:YIL078W"/>
<dbReference type="eggNOG" id="KOG1637">
    <property type="taxonomic scope" value="Eukaryota"/>
</dbReference>
<dbReference type="GeneTree" id="ENSGT00940000170409"/>
<dbReference type="HOGENOM" id="CLU_008554_0_1_1"/>
<dbReference type="InParanoid" id="P04801"/>
<dbReference type="OMA" id="WYADGMY"/>
<dbReference type="OrthoDB" id="5423599at2759"/>
<dbReference type="BioCyc" id="YEAST:G3O-31343-MONOMER"/>
<dbReference type="BioGRID-ORCS" id="854732">
    <property type="hits" value="4 hits in 10 CRISPR screens"/>
</dbReference>
<dbReference type="CD-CODE" id="E03F929F">
    <property type="entry name" value="Stress granule"/>
</dbReference>
<dbReference type="PRO" id="PR:P04801"/>
<dbReference type="Proteomes" id="UP000002311">
    <property type="component" value="Chromosome IX"/>
</dbReference>
<dbReference type="RNAct" id="P04801">
    <property type="molecule type" value="protein"/>
</dbReference>
<dbReference type="GO" id="GO:0005737">
    <property type="term" value="C:cytoplasm"/>
    <property type="evidence" value="ECO:0000315"/>
    <property type="project" value="SGD"/>
</dbReference>
<dbReference type="GO" id="GO:0005739">
    <property type="term" value="C:mitochondrion"/>
    <property type="evidence" value="ECO:0007005"/>
    <property type="project" value="SGD"/>
</dbReference>
<dbReference type="GO" id="GO:0005524">
    <property type="term" value="F:ATP binding"/>
    <property type="evidence" value="ECO:0007669"/>
    <property type="project" value="UniProtKB-KW"/>
</dbReference>
<dbReference type="GO" id="GO:1990825">
    <property type="term" value="F:sequence-specific mRNA binding"/>
    <property type="evidence" value="ECO:0000314"/>
    <property type="project" value="SGD"/>
</dbReference>
<dbReference type="GO" id="GO:0004829">
    <property type="term" value="F:threonine-tRNA ligase activity"/>
    <property type="evidence" value="ECO:0000314"/>
    <property type="project" value="SGD"/>
</dbReference>
<dbReference type="GO" id="GO:0006435">
    <property type="term" value="P:threonyl-tRNA aminoacylation"/>
    <property type="evidence" value="ECO:0000314"/>
    <property type="project" value="SGD"/>
</dbReference>
<dbReference type="CDD" id="cd01667">
    <property type="entry name" value="TGS_ThrRS"/>
    <property type="match status" value="1"/>
</dbReference>
<dbReference type="CDD" id="cd00860">
    <property type="entry name" value="ThrRS_anticodon"/>
    <property type="match status" value="1"/>
</dbReference>
<dbReference type="CDD" id="cd00771">
    <property type="entry name" value="ThrRS_core"/>
    <property type="match status" value="1"/>
</dbReference>
<dbReference type="FunFam" id="3.30.930.10:FF:000009">
    <property type="entry name" value="Threonine--tRNA ligase 2, cytoplasmic"/>
    <property type="match status" value="1"/>
</dbReference>
<dbReference type="FunFam" id="3.40.50.800:FF:000003">
    <property type="entry name" value="Threonine--tRNA ligase 2, cytoplasmic"/>
    <property type="match status" value="1"/>
</dbReference>
<dbReference type="FunFam" id="3.10.20.30:FF:000006">
    <property type="entry name" value="Threonine--tRNA ligase, cytoplasmic"/>
    <property type="match status" value="1"/>
</dbReference>
<dbReference type="FunFam" id="3.30.980.10:FF:000005">
    <property type="entry name" value="Threonyl-tRNA synthetase, mitochondrial"/>
    <property type="match status" value="1"/>
</dbReference>
<dbReference type="Gene3D" id="3.10.20.30">
    <property type="match status" value="1"/>
</dbReference>
<dbReference type="Gene3D" id="3.40.50.800">
    <property type="entry name" value="Anticodon-binding domain"/>
    <property type="match status" value="1"/>
</dbReference>
<dbReference type="Gene3D" id="3.30.930.10">
    <property type="entry name" value="Bira Bifunctional Protein, Domain 2"/>
    <property type="match status" value="1"/>
</dbReference>
<dbReference type="Gene3D" id="3.30.980.10">
    <property type="entry name" value="Threonyl-trna Synthetase, Chain A, domain 2"/>
    <property type="match status" value="1"/>
</dbReference>
<dbReference type="HAMAP" id="MF_00184">
    <property type="entry name" value="Thr_tRNA_synth"/>
    <property type="match status" value="1"/>
</dbReference>
<dbReference type="InterPro" id="IPR002314">
    <property type="entry name" value="aa-tRNA-synt_IIb"/>
</dbReference>
<dbReference type="InterPro" id="IPR006195">
    <property type="entry name" value="aa-tRNA-synth_II"/>
</dbReference>
<dbReference type="InterPro" id="IPR045864">
    <property type="entry name" value="aa-tRNA-synth_II/BPL/LPL"/>
</dbReference>
<dbReference type="InterPro" id="IPR004154">
    <property type="entry name" value="Anticodon-bd"/>
</dbReference>
<dbReference type="InterPro" id="IPR036621">
    <property type="entry name" value="Anticodon-bd_dom_sf"/>
</dbReference>
<dbReference type="InterPro" id="IPR012675">
    <property type="entry name" value="Beta-grasp_dom_sf"/>
</dbReference>
<dbReference type="InterPro" id="IPR004095">
    <property type="entry name" value="TGS"/>
</dbReference>
<dbReference type="InterPro" id="IPR012676">
    <property type="entry name" value="TGS-like"/>
</dbReference>
<dbReference type="InterPro" id="IPR002320">
    <property type="entry name" value="Thr-tRNA-ligase_IIa"/>
</dbReference>
<dbReference type="InterPro" id="IPR018163">
    <property type="entry name" value="Thr/Ala-tRNA-synth_IIc_edit"/>
</dbReference>
<dbReference type="InterPro" id="IPR047246">
    <property type="entry name" value="ThrRS_anticodon"/>
</dbReference>
<dbReference type="InterPro" id="IPR033728">
    <property type="entry name" value="ThrRS_core"/>
</dbReference>
<dbReference type="InterPro" id="IPR012947">
    <property type="entry name" value="tRNA_SAD"/>
</dbReference>
<dbReference type="NCBIfam" id="TIGR00418">
    <property type="entry name" value="thrS"/>
    <property type="match status" value="1"/>
</dbReference>
<dbReference type="PANTHER" id="PTHR11451:SF46">
    <property type="entry name" value="THREONINE--TRNA LIGASE"/>
    <property type="match status" value="1"/>
</dbReference>
<dbReference type="PANTHER" id="PTHR11451">
    <property type="entry name" value="THREONINE-TRNA LIGASE"/>
    <property type="match status" value="1"/>
</dbReference>
<dbReference type="Pfam" id="PF03129">
    <property type="entry name" value="HGTP_anticodon"/>
    <property type="match status" value="1"/>
</dbReference>
<dbReference type="Pfam" id="PF02824">
    <property type="entry name" value="TGS"/>
    <property type="match status" value="1"/>
</dbReference>
<dbReference type="Pfam" id="PF00587">
    <property type="entry name" value="tRNA-synt_2b"/>
    <property type="match status" value="1"/>
</dbReference>
<dbReference type="Pfam" id="PF07973">
    <property type="entry name" value="tRNA_SAD"/>
    <property type="match status" value="1"/>
</dbReference>
<dbReference type="PRINTS" id="PR01047">
    <property type="entry name" value="TRNASYNTHTHR"/>
</dbReference>
<dbReference type="SMART" id="SM00863">
    <property type="entry name" value="tRNA_SAD"/>
    <property type="match status" value="1"/>
</dbReference>
<dbReference type="SUPFAM" id="SSF52954">
    <property type="entry name" value="Class II aaRS ABD-related"/>
    <property type="match status" value="1"/>
</dbReference>
<dbReference type="SUPFAM" id="SSF55681">
    <property type="entry name" value="Class II aaRS and biotin synthetases"/>
    <property type="match status" value="1"/>
</dbReference>
<dbReference type="SUPFAM" id="SSF81271">
    <property type="entry name" value="TGS-like"/>
    <property type="match status" value="1"/>
</dbReference>
<dbReference type="SUPFAM" id="SSF55186">
    <property type="entry name" value="ThrRS/AlaRS common domain"/>
    <property type="match status" value="1"/>
</dbReference>
<dbReference type="PROSITE" id="PS50862">
    <property type="entry name" value="AA_TRNA_LIGASE_II"/>
    <property type="match status" value="1"/>
</dbReference>
<dbReference type="PROSITE" id="PS51880">
    <property type="entry name" value="TGS"/>
    <property type="match status" value="1"/>
</dbReference>
<name>SYTC_YEAST</name>
<accession>P04801</accession>
<accession>D6VVK6</accession>